<protein>
    <recommendedName>
        <fullName evidence="1">Asparagine--tRNA ligase</fullName>
        <ecNumber evidence="1">6.1.1.22</ecNumber>
    </recommendedName>
    <alternativeName>
        <fullName evidence="1">Asparaginyl-tRNA synthetase</fullName>
        <shortName evidence="1">AsnRS</shortName>
    </alternativeName>
</protein>
<organism>
    <name type="scientific">Clostridium acetobutylicum (strain ATCC 824 / DSM 792 / JCM 1419 / IAM 19013 / LMG 5710 / NBRC 13948 / NRRL B-527 / VKM B-1787 / 2291 / W)</name>
    <dbReference type="NCBI Taxonomy" id="272562"/>
    <lineage>
        <taxon>Bacteria</taxon>
        <taxon>Bacillati</taxon>
        <taxon>Bacillota</taxon>
        <taxon>Clostridia</taxon>
        <taxon>Eubacteriales</taxon>
        <taxon>Clostridiaceae</taxon>
        <taxon>Clostridium</taxon>
    </lineage>
</organism>
<sequence>MENVLVKQLYRLSSEFGGKKVRLSGWVRTIRASKSFGFIEINDGSFFKNIQVVFDDKLDNFKEISKFIISSTITVEGEFVLTPNAKQPFEIHAENITLEGNSDNDYPLQKKRHTLEYLRSIAHLRPRSNTFSAVFRVRSLAAYAVHKFFQERDFVYVNTPLITASDAEGAGEMFQVTTLDLKNPPKNEEGNIDFSKDFFGKKANLTVSGQLSAETFALAFRNVYTFGPTFRAEESNTTRHAAEFWMIEPEMAFAELSDYLDTAEEMVKYIINFVMENAPEEMEFFNTRIDKGLFDRLHNVVNSEFGRITYTEAVDILEKSGEKFEYPVKWGIDLQTEHERYLTDKVFKKPLFVTDYPKDIKAFYMRINDDNKTVAAADLLVPGVGEIIGGSQREERLAVLEKRMEELNLNKEDYWWYLELRKYGETKHSGYGLGFERMIMYLTGISNIRDVIPFPRTTGSAEF</sequence>
<reference key="1">
    <citation type="journal article" date="2001" name="J. Bacteriol.">
        <title>Genome sequence and comparative analysis of the solvent-producing bacterium Clostridium acetobutylicum.</title>
        <authorList>
            <person name="Noelling J."/>
            <person name="Breton G."/>
            <person name="Omelchenko M.V."/>
            <person name="Makarova K.S."/>
            <person name="Zeng Q."/>
            <person name="Gibson R."/>
            <person name="Lee H.M."/>
            <person name="Dubois J."/>
            <person name="Qiu D."/>
            <person name="Hitti J."/>
            <person name="Wolf Y.I."/>
            <person name="Tatusov R.L."/>
            <person name="Sabathe F."/>
            <person name="Doucette-Stamm L.A."/>
            <person name="Soucaille P."/>
            <person name="Daly M.J."/>
            <person name="Bennett G.N."/>
            <person name="Koonin E.V."/>
            <person name="Smith D.R."/>
        </authorList>
    </citation>
    <scope>NUCLEOTIDE SEQUENCE [LARGE SCALE GENOMIC DNA]</scope>
    <source>
        <strain>ATCC 824 / DSM 792 / JCM 1419 / IAM 19013 / LMG 5710 / NBRC 13948 / NRRL B-527 / VKM B-1787 / 2291 / W</strain>
    </source>
</reference>
<dbReference type="EC" id="6.1.1.22" evidence="1"/>
<dbReference type="EMBL" id="AE001437">
    <property type="protein sequence ID" value="AAK81194.1"/>
    <property type="molecule type" value="Genomic_DNA"/>
</dbReference>
<dbReference type="PIR" id="G97300">
    <property type="entry name" value="G97300"/>
</dbReference>
<dbReference type="RefSeq" id="NP_349854.1">
    <property type="nucleotide sequence ID" value="NC_003030.1"/>
</dbReference>
<dbReference type="RefSeq" id="WP_010966534.1">
    <property type="nucleotide sequence ID" value="NC_003030.1"/>
</dbReference>
<dbReference type="SMR" id="Q97E56"/>
<dbReference type="STRING" id="272562.CA_C3260"/>
<dbReference type="GeneID" id="44999755"/>
<dbReference type="KEGG" id="cac:CA_C3260"/>
<dbReference type="PATRIC" id="fig|272562.8.peg.3438"/>
<dbReference type="eggNOG" id="COG0017">
    <property type="taxonomic scope" value="Bacteria"/>
</dbReference>
<dbReference type="HOGENOM" id="CLU_004553_2_0_9"/>
<dbReference type="OrthoDB" id="9762036at2"/>
<dbReference type="Proteomes" id="UP000000814">
    <property type="component" value="Chromosome"/>
</dbReference>
<dbReference type="GO" id="GO:0005737">
    <property type="term" value="C:cytoplasm"/>
    <property type="evidence" value="ECO:0007669"/>
    <property type="project" value="UniProtKB-SubCell"/>
</dbReference>
<dbReference type="GO" id="GO:0004816">
    <property type="term" value="F:asparagine-tRNA ligase activity"/>
    <property type="evidence" value="ECO:0007669"/>
    <property type="project" value="UniProtKB-UniRule"/>
</dbReference>
<dbReference type="GO" id="GO:0005524">
    <property type="term" value="F:ATP binding"/>
    <property type="evidence" value="ECO:0007669"/>
    <property type="project" value="UniProtKB-UniRule"/>
</dbReference>
<dbReference type="GO" id="GO:0140096">
    <property type="term" value="F:catalytic activity, acting on a protein"/>
    <property type="evidence" value="ECO:0007669"/>
    <property type="project" value="UniProtKB-ARBA"/>
</dbReference>
<dbReference type="GO" id="GO:0003676">
    <property type="term" value="F:nucleic acid binding"/>
    <property type="evidence" value="ECO:0007669"/>
    <property type="project" value="InterPro"/>
</dbReference>
<dbReference type="GO" id="GO:0016740">
    <property type="term" value="F:transferase activity"/>
    <property type="evidence" value="ECO:0007669"/>
    <property type="project" value="UniProtKB-ARBA"/>
</dbReference>
<dbReference type="GO" id="GO:0006421">
    <property type="term" value="P:asparaginyl-tRNA aminoacylation"/>
    <property type="evidence" value="ECO:0007669"/>
    <property type="project" value="UniProtKB-UniRule"/>
</dbReference>
<dbReference type="CDD" id="cd00776">
    <property type="entry name" value="AsxRS_core"/>
    <property type="match status" value="1"/>
</dbReference>
<dbReference type="CDD" id="cd04318">
    <property type="entry name" value="EcAsnRS_like_N"/>
    <property type="match status" value="1"/>
</dbReference>
<dbReference type="FunFam" id="3.30.930.10:FF:000016">
    <property type="entry name" value="Asparagine--tRNA ligase"/>
    <property type="match status" value="1"/>
</dbReference>
<dbReference type="Gene3D" id="3.30.930.10">
    <property type="entry name" value="Bira Bifunctional Protein, Domain 2"/>
    <property type="match status" value="1"/>
</dbReference>
<dbReference type="Gene3D" id="2.40.50.140">
    <property type="entry name" value="Nucleic acid-binding proteins"/>
    <property type="match status" value="1"/>
</dbReference>
<dbReference type="HAMAP" id="MF_00534">
    <property type="entry name" value="Asn_tRNA_synth"/>
    <property type="match status" value="1"/>
</dbReference>
<dbReference type="InterPro" id="IPR004364">
    <property type="entry name" value="Aa-tRNA-synt_II"/>
</dbReference>
<dbReference type="InterPro" id="IPR006195">
    <property type="entry name" value="aa-tRNA-synth_II"/>
</dbReference>
<dbReference type="InterPro" id="IPR045864">
    <property type="entry name" value="aa-tRNA-synth_II/BPL/LPL"/>
</dbReference>
<dbReference type="InterPro" id="IPR004522">
    <property type="entry name" value="Asn-tRNA-ligase"/>
</dbReference>
<dbReference type="InterPro" id="IPR002312">
    <property type="entry name" value="Asp/Asn-tRNA-synth_IIb"/>
</dbReference>
<dbReference type="InterPro" id="IPR012340">
    <property type="entry name" value="NA-bd_OB-fold"/>
</dbReference>
<dbReference type="InterPro" id="IPR004365">
    <property type="entry name" value="NA-bd_OB_tRNA"/>
</dbReference>
<dbReference type="NCBIfam" id="TIGR00457">
    <property type="entry name" value="asnS"/>
    <property type="match status" value="1"/>
</dbReference>
<dbReference type="NCBIfam" id="NF003037">
    <property type="entry name" value="PRK03932.1"/>
    <property type="match status" value="1"/>
</dbReference>
<dbReference type="PANTHER" id="PTHR22594:SF34">
    <property type="entry name" value="ASPARAGINE--TRNA LIGASE, MITOCHONDRIAL-RELATED"/>
    <property type="match status" value="1"/>
</dbReference>
<dbReference type="PANTHER" id="PTHR22594">
    <property type="entry name" value="ASPARTYL/LYSYL-TRNA SYNTHETASE"/>
    <property type="match status" value="1"/>
</dbReference>
<dbReference type="Pfam" id="PF00152">
    <property type="entry name" value="tRNA-synt_2"/>
    <property type="match status" value="1"/>
</dbReference>
<dbReference type="Pfam" id="PF01336">
    <property type="entry name" value="tRNA_anti-codon"/>
    <property type="match status" value="1"/>
</dbReference>
<dbReference type="PRINTS" id="PR01042">
    <property type="entry name" value="TRNASYNTHASP"/>
</dbReference>
<dbReference type="SUPFAM" id="SSF55681">
    <property type="entry name" value="Class II aaRS and biotin synthetases"/>
    <property type="match status" value="1"/>
</dbReference>
<dbReference type="SUPFAM" id="SSF50249">
    <property type="entry name" value="Nucleic acid-binding proteins"/>
    <property type="match status" value="1"/>
</dbReference>
<dbReference type="PROSITE" id="PS50862">
    <property type="entry name" value="AA_TRNA_LIGASE_II"/>
    <property type="match status" value="1"/>
</dbReference>
<keyword id="KW-0030">Aminoacyl-tRNA synthetase</keyword>
<keyword id="KW-0067">ATP-binding</keyword>
<keyword id="KW-0963">Cytoplasm</keyword>
<keyword id="KW-0436">Ligase</keyword>
<keyword id="KW-0547">Nucleotide-binding</keyword>
<keyword id="KW-0648">Protein biosynthesis</keyword>
<keyword id="KW-1185">Reference proteome</keyword>
<evidence type="ECO:0000255" key="1">
    <source>
        <dbReference type="HAMAP-Rule" id="MF_00534"/>
    </source>
</evidence>
<gene>
    <name evidence="1" type="primary">asnS</name>
    <name type="ordered locus">CA_C3260</name>
</gene>
<name>SYN_CLOAB</name>
<comment type="catalytic activity">
    <reaction evidence="1">
        <text>tRNA(Asn) + L-asparagine + ATP = L-asparaginyl-tRNA(Asn) + AMP + diphosphate + H(+)</text>
        <dbReference type="Rhea" id="RHEA:11180"/>
        <dbReference type="Rhea" id="RHEA-COMP:9659"/>
        <dbReference type="Rhea" id="RHEA-COMP:9674"/>
        <dbReference type="ChEBI" id="CHEBI:15378"/>
        <dbReference type="ChEBI" id="CHEBI:30616"/>
        <dbReference type="ChEBI" id="CHEBI:33019"/>
        <dbReference type="ChEBI" id="CHEBI:58048"/>
        <dbReference type="ChEBI" id="CHEBI:78442"/>
        <dbReference type="ChEBI" id="CHEBI:78515"/>
        <dbReference type="ChEBI" id="CHEBI:456215"/>
        <dbReference type="EC" id="6.1.1.22"/>
    </reaction>
</comment>
<comment type="subunit">
    <text evidence="1">Homodimer.</text>
</comment>
<comment type="subcellular location">
    <subcellularLocation>
        <location evidence="1">Cytoplasm</location>
    </subcellularLocation>
</comment>
<comment type="similarity">
    <text evidence="1">Belongs to the class-II aminoacyl-tRNA synthetase family.</text>
</comment>
<feature type="chain" id="PRO_0000176401" description="Asparagine--tRNA ligase">
    <location>
        <begin position="1"/>
        <end position="463"/>
    </location>
</feature>
<accession>Q97E56</accession>
<proteinExistence type="inferred from homology"/>